<comment type="function">
    <text evidence="9 10">Required for the correct formation of lens intermediate filaments as part of a complex composed of BFSP1, BFSP2 and CRYAA (PubMed:28935373). Involved in altering the calcium regulation of MIP water permeability (PubMed:30790544).</text>
</comment>
<comment type="subunit">
    <text evidence="1 3 9">Part of a complex required for lens intermediate filament formation composed of BFSP1, BFSP2 and CRYAA (PubMed:28935373). Identified in a complex that contains VIM, EZR, AHNAK, BFSP1, BFSP2, ANK2, PLEC, PRX and spectrin (By similarity). Found in a complex composed of PPL (via C-terminal linker domain), BFSP1 and BFSP2 in the retinal lens (By similarity). Within the complex interacts with BFSP2 (By similarity). Interacts (via C-terminus) with MIP (via C-terminus) in aged lens fiber cells (By similarity).</text>
</comment>
<comment type="interaction">
    <interactant intactId="EBI-10227494">
        <id>Q12934</id>
    </interactant>
    <interactant intactId="EBI-347978">
        <id>P37198</id>
        <label>NUP62</label>
    </interactant>
    <organismsDiffer>false</organismsDiffer>
    <experiments>3</experiments>
</comment>
<comment type="interaction">
    <interactant intactId="EBI-12123320">
        <id>Q12934-2</id>
    </interactant>
    <interactant intactId="EBI-10229433">
        <id>Q13515</id>
        <label>BFSP2</label>
    </interactant>
    <organismsDiffer>false</organismsDiffer>
    <experiments>5</experiments>
</comment>
<comment type="interaction">
    <interactant intactId="EBI-12123320">
        <id>Q12934-2</id>
    </interactant>
    <interactant intactId="EBI-358049">
        <id>Q13895</id>
        <label>BYSL</label>
    </interactant>
    <organismsDiffer>false</organismsDiffer>
    <experiments>3</experiments>
</comment>
<comment type="interaction">
    <interactant intactId="EBI-12123320">
        <id>Q12934-2</id>
    </interactant>
    <interactant intactId="EBI-10175300">
        <id>Q8TD31-3</id>
        <label>CCHCR1</label>
    </interactant>
    <organismsDiffer>false</organismsDiffer>
    <experiments>3</experiments>
</comment>
<comment type="interaction">
    <interactant intactId="EBI-12123320">
        <id>Q12934-2</id>
    </interactant>
    <interactant intactId="EBI-11748557">
        <id>Q9Y6C2-2</id>
        <label>EMILIN1</label>
    </interactant>
    <organismsDiffer>false</organismsDiffer>
    <experiments>3</experiments>
</comment>
<comment type="interaction">
    <interactant intactId="EBI-12123320">
        <id>Q12934-2</id>
    </interactant>
    <interactant intactId="EBI-14069005">
        <id>Q9BVG8-5</id>
        <label>KIFC3</label>
    </interactant>
    <organismsDiffer>false</organismsDiffer>
    <experiments>3</experiments>
</comment>
<comment type="interaction">
    <interactant intactId="EBI-12123320">
        <id>Q12934-2</id>
    </interactant>
    <interactant intactId="EBI-3044087">
        <id>Q7Z3Y8</id>
        <label>KRT27</label>
    </interactant>
    <organismsDiffer>false</organismsDiffer>
    <experiments>3</experiments>
</comment>
<comment type="interaction">
    <interactant intactId="EBI-12123320">
        <id>Q12934-2</id>
    </interactant>
    <interactant intactId="EBI-347978">
        <id>P37198</id>
        <label>NUP62</label>
    </interactant>
    <organismsDiffer>false</organismsDiffer>
    <experiments>3</experiments>
</comment>
<comment type="interaction">
    <interactant intactId="EBI-12123320">
        <id>Q12934-2</id>
    </interactant>
    <interactant intactId="EBI-296723">
        <id>O95295</id>
        <label>SNAPIN</label>
    </interactant>
    <organismsDiffer>false</organismsDiffer>
    <experiments>3</experiments>
</comment>
<comment type="interaction">
    <interactant intactId="EBI-12123320">
        <id>Q12934-2</id>
    </interactant>
    <interactant intactId="EBI-739895">
        <id>Q8N6Y0</id>
        <label>USHBP1</label>
    </interactant>
    <organismsDiffer>false</organismsDiffer>
    <experiments>3</experiments>
</comment>
<comment type="interaction">
    <interactant intactId="EBI-12123320">
        <id>Q12934-2</id>
    </interactant>
    <interactant intactId="EBI-1001132">
        <id>O95229</id>
        <label>ZWINT</label>
    </interactant>
    <organismsDiffer>false</organismsDiffer>
    <experiments>3</experiments>
</comment>
<comment type="subcellular location">
    <subcellularLocation>
        <location evidence="3">Cell membrane</location>
        <topology evidence="3">Peripheral membrane protein</topology>
        <orientation evidence="3">Cytoplasmic side</orientation>
    </subcellularLocation>
    <subcellularLocation>
        <location evidence="2">Cytoplasm</location>
    </subcellularLocation>
    <subcellularLocation>
        <location evidence="3">Cytoplasm</location>
        <location evidence="3">Cytoskeleton</location>
    </subcellularLocation>
    <subcellularLocation>
        <location evidence="3">Cytoplasm</location>
        <location evidence="3">Cell cortex</location>
    </subcellularLocation>
</comment>
<comment type="alternative products">
    <event type="alternative splicing"/>
    <isoform>
        <id>Q12934-1</id>
        <name>1</name>
        <sequence type="displayed"/>
    </isoform>
    <isoform>
        <id>Q12934-2</id>
        <name>2</name>
        <sequence type="described" ref="VSP_024921 VSP_024922"/>
    </isoform>
    <isoform>
        <id>Q12934-3</id>
        <name>3</name>
        <sequence type="described" ref="VSP_055064"/>
    </isoform>
</comment>
<comment type="tissue specificity">
    <text evidence="10 11">Expressed in the cortex and nucleus of the retina lens (at protein level).</text>
</comment>
<comment type="PTM">
    <text evidence="3">Proteolytically cleaved during lens cell fiber differentiation with increased fragmentation as fiber cell age increases.</text>
</comment>
<comment type="PTM">
    <molecule>Filensin C-terminal fragment</molecule>
    <text evidence="10">Myristoylated at Gly-434 following proteolytic cleavage at Asp-433.</text>
</comment>
<comment type="PTM">
    <molecule>Filensin N-terminal fragment</molecule>
    <text evidence="3">Acetylated at Ala-42 following proteolytic cleavage at Leu-41.</text>
</comment>
<comment type="disease" evidence="6 7 8">
    <disease id="DI-01235">
        <name>Cataract 33, multiple types</name>
        <acronym>CTRCT33</acronym>
        <description>An opacification of the crystalline lens of the eye that frequently results in visual impairment or blindness. Opacities vary in morphology, are often confined to a portion of the lens, and may be static or progressive. In general, the more posteriorly located and dense an opacity, the greater the impact on visual function. CTRCT33 has juvenile-onset and the opacities are restricted to the cortex of the lens, not involving the nucleus.</description>
        <dbReference type="MIM" id="611391"/>
    </disease>
    <text>The disease is caused by variants affecting the gene represented in this entry.</text>
</comment>
<comment type="similarity">
    <text evidence="4">Belongs to the intermediate filament family.</text>
</comment>
<comment type="sequence caution" evidence="14">
    <conflict type="erroneous gene model prediction">
        <sequence resource="EMBL-CDS" id="CAA76349"/>
    </conflict>
</comment>
<proteinExistence type="evidence at protein level"/>
<dbReference type="EMBL" id="AF039655">
    <property type="protein sequence ID" value="AAB94939.1"/>
    <property type="molecule type" value="mRNA"/>
</dbReference>
<dbReference type="EMBL" id="Y16717">
    <property type="protein sequence ID" value="CAA76348.1"/>
    <property type="molecule type" value="mRNA"/>
</dbReference>
<dbReference type="EMBL" id="Y16718">
    <property type="protein sequence ID" value="CAA76349.1"/>
    <property type="status" value="ALT_SEQ"/>
    <property type="molecule type" value="Genomic_DNA"/>
</dbReference>
<dbReference type="EMBL" id="Y16719">
    <property type="protein sequence ID" value="CAA76349.1"/>
    <property type="status" value="JOINED"/>
    <property type="molecule type" value="Genomic_DNA"/>
</dbReference>
<dbReference type="EMBL" id="Y16720">
    <property type="protein sequence ID" value="CAA76349.1"/>
    <property type="status" value="JOINED"/>
    <property type="molecule type" value="Genomic_DNA"/>
</dbReference>
<dbReference type="EMBL" id="Y16722">
    <property type="protein sequence ID" value="CAA76349.1"/>
    <property type="status" value="JOINED"/>
    <property type="molecule type" value="Genomic_DNA"/>
</dbReference>
<dbReference type="EMBL" id="Y16723">
    <property type="protein sequence ID" value="CAA76349.1"/>
    <property type="status" value="JOINED"/>
    <property type="molecule type" value="Genomic_DNA"/>
</dbReference>
<dbReference type="EMBL" id="Y16721">
    <property type="protein sequence ID" value="CAA76349.1"/>
    <property type="status" value="JOINED"/>
    <property type="molecule type" value="Genomic_DNA"/>
</dbReference>
<dbReference type="EMBL" id="AL031664">
    <property type="status" value="NOT_ANNOTATED_CDS"/>
    <property type="molecule type" value="Genomic_DNA"/>
</dbReference>
<dbReference type="EMBL" id="AL132765">
    <property type="status" value="NOT_ANNOTATED_CDS"/>
    <property type="molecule type" value="Genomic_DNA"/>
</dbReference>
<dbReference type="EMBL" id="BC041483">
    <property type="protein sequence ID" value="AAH41483.1"/>
    <property type="molecule type" value="mRNA"/>
</dbReference>
<dbReference type="EMBL" id="U12622">
    <property type="protein sequence ID" value="AAA74423.1"/>
    <property type="molecule type" value="mRNA"/>
</dbReference>
<dbReference type="EMBL" id="AH009849">
    <property type="protein sequence ID" value="AAG17186.1"/>
    <property type="molecule type" value="Genomic_DNA"/>
</dbReference>
<dbReference type="CCDS" id="CCDS13126.1">
    <molecule id="Q12934-1"/>
</dbReference>
<dbReference type="CCDS" id="CCDS54448.1">
    <molecule id="Q12934-2"/>
</dbReference>
<dbReference type="CCDS" id="CCDS63229.1">
    <molecule id="Q12934-3"/>
</dbReference>
<dbReference type="PIR" id="I38730">
    <property type="entry name" value="I38730"/>
</dbReference>
<dbReference type="RefSeq" id="NP_001155177.1">
    <molecule id="Q12934-2"/>
    <property type="nucleotide sequence ID" value="NM_001161705.2"/>
</dbReference>
<dbReference type="RefSeq" id="NP_001186.1">
    <molecule id="Q12934-1"/>
    <property type="nucleotide sequence ID" value="NM_001195.5"/>
</dbReference>
<dbReference type="RefSeq" id="NP_001265535.1">
    <molecule id="Q12934-3"/>
    <property type="nucleotide sequence ID" value="NM_001278606.2"/>
</dbReference>
<dbReference type="RefSeq" id="NP_001265536.1">
    <property type="nucleotide sequence ID" value="NM_001278607.1"/>
</dbReference>
<dbReference type="RefSeq" id="NP_001265537.1">
    <molecule id="Q12934-3"/>
    <property type="nucleotide sequence ID" value="NM_001278608.2"/>
</dbReference>
<dbReference type="SMR" id="Q12934"/>
<dbReference type="BioGRID" id="107100">
    <property type="interactions" value="51"/>
</dbReference>
<dbReference type="FunCoup" id="Q12934">
    <property type="interactions" value="143"/>
</dbReference>
<dbReference type="IntAct" id="Q12934">
    <property type="interactions" value="46"/>
</dbReference>
<dbReference type="STRING" id="9606.ENSP00000367104"/>
<dbReference type="GlyGen" id="Q12934">
    <property type="glycosylation" value="2 sites, 1 O-linked glycan (1 site)"/>
</dbReference>
<dbReference type="iPTMnet" id="Q12934"/>
<dbReference type="PhosphoSitePlus" id="Q12934"/>
<dbReference type="BioMuta" id="BFSP1"/>
<dbReference type="DMDM" id="17372543"/>
<dbReference type="jPOST" id="Q12934"/>
<dbReference type="MassIVE" id="Q12934"/>
<dbReference type="PaxDb" id="9606-ENSP00000367104"/>
<dbReference type="PeptideAtlas" id="Q12934"/>
<dbReference type="ProteomicsDB" id="25331"/>
<dbReference type="ProteomicsDB" id="59039">
    <molecule id="Q12934-1"/>
</dbReference>
<dbReference type="ProteomicsDB" id="59040">
    <molecule id="Q12934-2"/>
</dbReference>
<dbReference type="Pumba" id="Q12934"/>
<dbReference type="Antibodypedia" id="9222">
    <property type="antibodies" value="294 antibodies from 28 providers"/>
</dbReference>
<dbReference type="DNASU" id="631"/>
<dbReference type="Ensembl" id="ENST00000377868.6">
    <molecule id="Q12934-2"/>
    <property type="protein sequence ID" value="ENSP00000367099.2"/>
    <property type="gene ID" value="ENSG00000125864.14"/>
</dbReference>
<dbReference type="Ensembl" id="ENST00000377873.8">
    <molecule id="Q12934-1"/>
    <property type="protein sequence ID" value="ENSP00000367104.3"/>
    <property type="gene ID" value="ENSG00000125864.14"/>
</dbReference>
<dbReference type="Ensembl" id="ENST00000536626.7">
    <molecule id="Q12934-3"/>
    <property type="protein sequence ID" value="ENSP00000442522.1"/>
    <property type="gene ID" value="ENSG00000125864.14"/>
</dbReference>
<dbReference type="GeneID" id="631"/>
<dbReference type="KEGG" id="hsa:631"/>
<dbReference type="MANE-Select" id="ENST00000377873.8">
    <property type="protein sequence ID" value="ENSP00000367104.3"/>
    <property type="RefSeq nucleotide sequence ID" value="NM_001195.5"/>
    <property type="RefSeq protein sequence ID" value="NP_001186.1"/>
</dbReference>
<dbReference type="UCSC" id="uc002wpo.4">
    <molecule id="Q12934-1"/>
    <property type="organism name" value="human"/>
</dbReference>
<dbReference type="AGR" id="HGNC:1040"/>
<dbReference type="CTD" id="631"/>
<dbReference type="DisGeNET" id="631"/>
<dbReference type="GeneCards" id="BFSP1"/>
<dbReference type="HGNC" id="HGNC:1040">
    <property type="gene designation" value="BFSP1"/>
</dbReference>
<dbReference type="HPA" id="ENSG00000125864">
    <property type="expression patterns" value="Low tissue specificity"/>
</dbReference>
<dbReference type="MalaCards" id="BFSP1"/>
<dbReference type="MIM" id="603307">
    <property type="type" value="gene"/>
</dbReference>
<dbReference type="MIM" id="611391">
    <property type="type" value="phenotype"/>
</dbReference>
<dbReference type="neXtProt" id="NX_Q12934"/>
<dbReference type="OpenTargets" id="ENSG00000125864"/>
<dbReference type="Orphanet" id="98991">
    <property type="disease" value="Early-onset nuclear cataract"/>
</dbReference>
<dbReference type="PharmGKB" id="PA25343"/>
<dbReference type="VEuPathDB" id="HostDB:ENSG00000125864"/>
<dbReference type="eggNOG" id="ENOG502QRCH">
    <property type="taxonomic scope" value="Eukaryota"/>
</dbReference>
<dbReference type="GeneTree" id="ENSGT00390000016976"/>
<dbReference type="HOGENOM" id="CLU_028949_0_0_1"/>
<dbReference type="InParanoid" id="Q12934"/>
<dbReference type="OMA" id="IQTTPRV"/>
<dbReference type="OrthoDB" id="9942423at2759"/>
<dbReference type="PAN-GO" id="Q12934">
    <property type="GO annotations" value="4 GO annotations based on evolutionary models"/>
</dbReference>
<dbReference type="PhylomeDB" id="Q12934"/>
<dbReference type="TreeFam" id="TF331671"/>
<dbReference type="PathwayCommons" id="Q12934"/>
<dbReference type="SignaLink" id="Q12934"/>
<dbReference type="BioGRID-ORCS" id="631">
    <property type="hits" value="16 hits in 1151 CRISPR screens"/>
</dbReference>
<dbReference type="ChiTaRS" id="BFSP1">
    <property type="organism name" value="human"/>
</dbReference>
<dbReference type="GeneWiki" id="BFSP1"/>
<dbReference type="GenomeRNAi" id="631"/>
<dbReference type="Pharos" id="Q12934">
    <property type="development level" value="Tbio"/>
</dbReference>
<dbReference type="PRO" id="PR:Q12934"/>
<dbReference type="Proteomes" id="UP000005640">
    <property type="component" value="Chromosome 20"/>
</dbReference>
<dbReference type="RNAct" id="Q12934">
    <property type="molecule type" value="protein"/>
</dbReference>
<dbReference type="Bgee" id="ENSG00000125864">
    <property type="expression patterns" value="Expressed in tendon of biceps brachii and 118 other cell types or tissues"/>
</dbReference>
<dbReference type="GO" id="GO:0005938">
    <property type="term" value="C:cell cortex"/>
    <property type="evidence" value="ECO:0007669"/>
    <property type="project" value="UniProtKB-SubCell"/>
</dbReference>
<dbReference type="GO" id="GO:0005737">
    <property type="term" value="C:cytoplasm"/>
    <property type="evidence" value="ECO:0000250"/>
    <property type="project" value="UniProtKB"/>
</dbReference>
<dbReference type="GO" id="GO:0005882">
    <property type="term" value="C:intermediate filament"/>
    <property type="evidence" value="ECO:0000250"/>
    <property type="project" value="UniProtKB"/>
</dbReference>
<dbReference type="GO" id="GO:0005886">
    <property type="term" value="C:plasma membrane"/>
    <property type="evidence" value="ECO:0000250"/>
    <property type="project" value="UniProtKB"/>
</dbReference>
<dbReference type="GO" id="GO:0005200">
    <property type="term" value="F:structural constituent of cytoskeleton"/>
    <property type="evidence" value="ECO:0000304"/>
    <property type="project" value="ProtInc"/>
</dbReference>
<dbReference type="GO" id="GO:0005212">
    <property type="term" value="F:structural constituent of eye lens"/>
    <property type="evidence" value="ECO:0000318"/>
    <property type="project" value="GO_Central"/>
</dbReference>
<dbReference type="GO" id="GO:0048469">
    <property type="term" value="P:cell maturation"/>
    <property type="evidence" value="ECO:0007669"/>
    <property type="project" value="Ensembl"/>
</dbReference>
<dbReference type="GO" id="GO:0045109">
    <property type="term" value="P:intermediate filament organization"/>
    <property type="evidence" value="ECO:0000250"/>
    <property type="project" value="UniProtKB"/>
</dbReference>
<dbReference type="GO" id="GO:0070307">
    <property type="term" value="P:lens fiber cell development"/>
    <property type="evidence" value="ECO:0000318"/>
    <property type="project" value="GO_Central"/>
</dbReference>
<dbReference type="FunFam" id="1.20.5.170:FF:000094">
    <property type="entry name" value="Beaded filament structural protein 1"/>
    <property type="match status" value="1"/>
</dbReference>
<dbReference type="FunFam" id="1.20.5.1160:FF:000009">
    <property type="entry name" value="filensin isoform X2"/>
    <property type="match status" value="1"/>
</dbReference>
<dbReference type="Gene3D" id="1.20.5.170">
    <property type="match status" value="1"/>
</dbReference>
<dbReference type="Gene3D" id="1.20.5.1160">
    <property type="entry name" value="Vasodilator-stimulated phosphoprotein"/>
    <property type="match status" value="1"/>
</dbReference>
<dbReference type="InterPro" id="IPR042358">
    <property type="entry name" value="BFSP1"/>
</dbReference>
<dbReference type="InterPro" id="IPR039008">
    <property type="entry name" value="IF_rod_dom"/>
</dbReference>
<dbReference type="PANTHER" id="PTHR14069">
    <property type="entry name" value="FILENSIN"/>
    <property type="match status" value="1"/>
</dbReference>
<dbReference type="PANTHER" id="PTHR14069:SF0">
    <property type="entry name" value="FILENSIN"/>
    <property type="match status" value="1"/>
</dbReference>
<dbReference type="Pfam" id="PF00038">
    <property type="entry name" value="Filament"/>
    <property type="match status" value="1"/>
</dbReference>
<dbReference type="SMART" id="SM01391">
    <property type="entry name" value="Filament"/>
    <property type="match status" value="1"/>
</dbReference>
<dbReference type="PROSITE" id="PS51842">
    <property type="entry name" value="IF_ROD_2"/>
    <property type="match status" value="1"/>
</dbReference>
<protein>
    <recommendedName>
        <fullName>Filensin</fullName>
    </recommendedName>
    <alternativeName>
        <fullName>Beaded filament structural protein 1</fullName>
    </alternativeName>
    <alternativeName>
        <fullName>Lens fiber cell beaded-filament structural protein CP 115</fullName>
        <shortName>CP115</shortName>
    </alternativeName>
    <alternativeName>
        <fullName>Lens intermediate filament-like heavy</fullName>
        <shortName>LIFL-H</shortName>
    </alternativeName>
    <component>
        <recommendedName>
            <fullName evidence="13">Filensin C-terminal fragment</fullName>
        </recommendedName>
    </component>
    <component>
        <recommendedName>
            <fullName evidence="3">Filensin N-terminal fragment</fullName>
        </recommendedName>
    </component>
</protein>
<gene>
    <name type="primary">BFSP1</name>
</gene>
<name>BFSP1_HUMAN</name>
<accession>Q12934</accession>
<accession>F5H0G1</accession>
<accession>O43595</accession>
<accession>O76034</accession>
<accession>O95676</accession>
<accession>Q8IVZ6</accession>
<accession>Q9HBX4</accession>
<organism>
    <name type="scientific">Homo sapiens</name>
    <name type="common">Human</name>
    <dbReference type="NCBI Taxonomy" id="9606"/>
    <lineage>
        <taxon>Eukaryota</taxon>
        <taxon>Metazoa</taxon>
        <taxon>Chordata</taxon>
        <taxon>Craniata</taxon>
        <taxon>Vertebrata</taxon>
        <taxon>Euteleostomi</taxon>
        <taxon>Mammalia</taxon>
        <taxon>Eutheria</taxon>
        <taxon>Euarchontoglires</taxon>
        <taxon>Primates</taxon>
        <taxon>Haplorrhini</taxon>
        <taxon>Catarrhini</taxon>
        <taxon>Hominidae</taxon>
        <taxon>Homo</taxon>
    </lineage>
</organism>
<feature type="chain" id="PRO_0000063847" description="Filensin">
    <location>
        <begin position="1"/>
        <end position="665"/>
    </location>
</feature>
<feature type="chain" id="PRO_0000448670" description="Filensin N-terminal fragment" evidence="3">
    <location>
        <begin position="42"/>
        <end position="433"/>
    </location>
</feature>
<feature type="chain" id="PRO_0000448671" description="Filensin C-terminal fragment" evidence="10">
    <location>
        <begin position="434"/>
        <end position="665"/>
    </location>
</feature>
<feature type="domain" description="IF rod" evidence="4">
    <location>
        <begin position="40"/>
        <end position="320"/>
    </location>
</feature>
<feature type="region of interest" description="Head">
    <location>
        <begin position="1"/>
        <end position="40"/>
    </location>
</feature>
<feature type="region of interest" description="Coil 1A">
    <location>
        <begin position="41"/>
        <end position="75"/>
    </location>
</feature>
<feature type="region of interest" description="Linker 1">
    <location>
        <begin position="76"/>
        <end position="84"/>
    </location>
</feature>
<feature type="region of interest" description="Coil 1B">
    <location>
        <begin position="85"/>
        <end position="184"/>
    </location>
</feature>
<feature type="region of interest" description="Linker 12">
    <location>
        <begin position="185"/>
        <end position="201"/>
    </location>
</feature>
<feature type="region of interest" description="Coil 2">
    <location>
        <begin position="202"/>
        <end position="320"/>
    </location>
</feature>
<feature type="region of interest" description="Tail">
    <location>
        <begin position="321"/>
        <end position="665"/>
    </location>
</feature>
<feature type="region of interest" description="Disordered" evidence="5">
    <location>
        <begin position="410"/>
        <end position="439"/>
    </location>
</feature>
<feature type="region of interest" description="Disordered" evidence="5">
    <location>
        <begin position="506"/>
        <end position="614"/>
    </location>
</feature>
<feature type="compositionally biased region" description="Basic and acidic residues" evidence="5">
    <location>
        <begin position="556"/>
        <end position="571"/>
    </location>
</feature>
<feature type="site" description="Cleavage" evidence="3">
    <location>
        <begin position="41"/>
        <end position="42"/>
    </location>
</feature>
<feature type="site" description="Cleavage (by CASP2, CASP3, and CASP7)" evidence="10">
    <location>
        <begin position="433"/>
        <end position="434"/>
    </location>
</feature>
<feature type="site" description="Interaction with MIP" evidence="3">
    <location>
        <position position="457"/>
    </location>
</feature>
<feature type="modified residue" description="Phosphoserine" evidence="3">
    <location>
        <position position="5"/>
    </location>
</feature>
<feature type="modified residue" description="N-acetylalanine" evidence="3">
    <location>
        <position position="42"/>
    </location>
</feature>
<feature type="modified residue" description="Phosphoserine" evidence="3">
    <location>
        <position position="341"/>
    </location>
</feature>
<feature type="modified residue" description="Phosphoserine" evidence="3">
    <location>
        <position position="420"/>
    </location>
</feature>
<feature type="modified residue" description="Phosphoserine" evidence="3">
    <location>
        <position position="513"/>
    </location>
</feature>
<feature type="modified residue" description="Phosphoserine" evidence="3">
    <location>
        <position position="665"/>
    </location>
</feature>
<feature type="lipid moiety-binding region" description="N-myristoyl glycine" evidence="10">
    <location>
        <position position="434"/>
    </location>
</feature>
<feature type="splice variant" id="VSP_055064" description="In isoform 3." evidence="14">
    <location>
        <begin position="1"/>
        <end position="139"/>
    </location>
</feature>
<feature type="splice variant" id="VSP_024921" description="In isoform 2." evidence="12">
    <location>
        <begin position="1"/>
        <end position="125"/>
    </location>
</feature>
<feature type="splice variant" id="VSP_024922" description="In isoform 2." evidence="12">
    <original>K</original>
    <variation>M</variation>
    <location>
        <position position="126"/>
    </location>
</feature>
<feature type="sequence variant" id="VAR_024492" description="In dbSNP:rs6080719.">
    <original>G</original>
    <variation>S</variation>
    <location>
        <position position="345"/>
    </location>
</feature>
<feature type="sequence variant" id="VAR_078861" description="In CTRCT33; dbSNP:rs1085307126." evidence="7">
    <original>D</original>
    <variation>N</variation>
    <location>
        <position position="348"/>
    </location>
</feature>
<feature type="sequence variant" id="VAR_036683" description="In dbSNP:rs16999317.">
    <original>D</original>
    <variation>E</variation>
    <location>
        <position position="656"/>
    </location>
</feature>
<feature type="mutagenesis site" description="Abolishes cleavage by CASP2." evidence="10">
    <original>D</original>
    <variation>A</variation>
    <location>
        <position position="433"/>
    </location>
</feature>
<feature type="mutagenesis site" description="No effect on cleavage." evidence="10">
    <original>G</original>
    <variation>A</variation>
    <location>
        <position position="434"/>
    </location>
</feature>
<feature type="sequence conflict" description="In Ref. 6; AAG17186." evidence="14" ref="6">
    <original>R</original>
    <variation>P</variation>
    <location>
        <position position="96"/>
    </location>
</feature>
<feature type="sequence conflict" description="In Ref. 5; AAA74423." evidence="14" ref="5">
    <original>HK</original>
    <variation>TR</variation>
    <location>
        <begin position="176"/>
        <end position="177"/>
    </location>
</feature>
<feature type="sequence conflict" description="In Ref. 5; AAA74423." evidence="14" ref="5">
    <original>T</original>
    <variation>A</variation>
    <location>
        <position position="248"/>
    </location>
</feature>
<feature type="sequence conflict" description="In Ref. 1; AAB94939." evidence="14" ref="1">
    <original>K</original>
    <variation>R</variation>
    <location>
        <position position="398"/>
    </location>
</feature>
<feature type="sequence conflict" description="In Ref. 1; AAB94939." evidence="14" ref="1">
    <original>E</original>
    <variation>G</variation>
    <location>
        <position position="568"/>
    </location>
</feature>
<evidence type="ECO:0000250" key="1">
    <source>
        <dbReference type="UniProtKB" id="A2AMT1"/>
    </source>
</evidence>
<evidence type="ECO:0000250" key="2">
    <source>
        <dbReference type="UniProtKB" id="Q02435"/>
    </source>
</evidence>
<evidence type="ECO:0000250" key="3">
    <source>
        <dbReference type="UniProtKB" id="Q06002"/>
    </source>
</evidence>
<evidence type="ECO:0000255" key="4">
    <source>
        <dbReference type="PROSITE-ProRule" id="PRU01188"/>
    </source>
</evidence>
<evidence type="ECO:0000256" key="5">
    <source>
        <dbReference type="SAM" id="MobiDB-lite"/>
    </source>
</evidence>
<evidence type="ECO:0000269" key="6">
    <source>
    </source>
</evidence>
<evidence type="ECO:0000269" key="7">
    <source>
    </source>
</evidence>
<evidence type="ECO:0000269" key="8">
    <source>
    </source>
</evidence>
<evidence type="ECO:0000269" key="9">
    <source>
    </source>
</evidence>
<evidence type="ECO:0000269" key="10">
    <source>
    </source>
</evidence>
<evidence type="ECO:0000269" key="11">
    <source>
    </source>
</evidence>
<evidence type="ECO:0000303" key="12">
    <source>
    </source>
</evidence>
<evidence type="ECO:0000303" key="13">
    <source>
    </source>
</evidence>
<evidence type="ECO:0000305" key="14"/>
<reference key="1">
    <citation type="journal article" date="1998" name="Exp. Eye Res.">
        <title>Primary sequence, secondary structure, gene structure, and assembly properties suggests that the lens-specific cytoskeletal protein filensin represents a novel class of intermediate filament protein.</title>
        <authorList>
            <person name="Hess J.F."/>
            <person name="Casselman J.T."/>
            <person name="Kong A.P."/>
            <person name="FitzGerald P.G."/>
        </authorList>
    </citation>
    <scope>NUCLEOTIDE SEQUENCE [MRNA] (ISOFORM 1)</scope>
</reference>
<reference key="2">
    <citation type="journal article" date="1998" name="Genomics">
        <title>Isolation of the human beaded-filament structural protein 1 gene (BFSP1) and assignment to chromosome 20p11.23-p12.1.</title>
        <authorList>
            <person name="Rendtorff N.D."/>
            <person name="Hansen C."/>
            <person name="Silahtaroglu A."/>
            <person name="Henriksen K.F."/>
            <person name="Tommerup N."/>
        </authorList>
    </citation>
    <scope>NUCLEOTIDE SEQUENCE [GENOMIC DNA / MRNA] (ISOFORM 1)</scope>
</reference>
<reference key="3">
    <citation type="journal article" date="2001" name="Nature">
        <title>The DNA sequence and comparative analysis of human chromosome 20.</title>
        <authorList>
            <person name="Deloukas P."/>
            <person name="Matthews L.H."/>
            <person name="Ashurst J.L."/>
            <person name="Burton J."/>
            <person name="Gilbert J.G.R."/>
            <person name="Jones M."/>
            <person name="Stavrides G."/>
            <person name="Almeida J.P."/>
            <person name="Babbage A.K."/>
            <person name="Bagguley C.L."/>
            <person name="Bailey J."/>
            <person name="Barlow K.F."/>
            <person name="Bates K.N."/>
            <person name="Beard L.M."/>
            <person name="Beare D.M."/>
            <person name="Beasley O.P."/>
            <person name="Bird C.P."/>
            <person name="Blakey S.E."/>
            <person name="Bridgeman A.M."/>
            <person name="Brown A.J."/>
            <person name="Buck D."/>
            <person name="Burrill W.D."/>
            <person name="Butler A.P."/>
            <person name="Carder C."/>
            <person name="Carter N.P."/>
            <person name="Chapman J.C."/>
            <person name="Clamp M."/>
            <person name="Clark G."/>
            <person name="Clark L.N."/>
            <person name="Clark S.Y."/>
            <person name="Clee C.M."/>
            <person name="Clegg S."/>
            <person name="Cobley V.E."/>
            <person name="Collier R.E."/>
            <person name="Connor R.E."/>
            <person name="Corby N.R."/>
            <person name="Coulson A."/>
            <person name="Coville G.J."/>
            <person name="Deadman R."/>
            <person name="Dhami P.D."/>
            <person name="Dunn M."/>
            <person name="Ellington A.G."/>
            <person name="Frankland J.A."/>
            <person name="Fraser A."/>
            <person name="French L."/>
            <person name="Garner P."/>
            <person name="Grafham D.V."/>
            <person name="Griffiths C."/>
            <person name="Griffiths M.N.D."/>
            <person name="Gwilliam R."/>
            <person name="Hall R.E."/>
            <person name="Hammond S."/>
            <person name="Harley J.L."/>
            <person name="Heath P.D."/>
            <person name="Ho S."/>
            <person name="Holden J.L."/>
            <person name="Howden P.J."/>
            <person name="Huckle E."/>
            <person name="Hunt A.R."/>
            <person name="Hunt S.E."/>
            <person name="Jekosch K."/>
            <person name="Johnson C.M."/>
            <person name="Johnson D."/>
            <person name="Kay M.P."/>
            <person name="Kimberley A.M."/>
            <person name="King A."/>
            <person name="Knights A."/>
            <person name="Laird G.K."/>
            <person name="Lawlor S."/>
            <person name="Lehvaeslaiho M.H."/>
            <person name="Leversha M.A."/>
            <person name="Lloyd C."/>
            <person name="Lloyd D.M."/>
            <person name="Lovell J.D."/>
            <person name="Marsh V.L."/>
            <person name="Martin S.L."/>
            <person name="McConnachie L.J."/>
            <person name="McLay K."/>
            <person name="McMurray A.A."/>
            <person name="Milne S.A."/>
            <person name="Mistry D."/>
            <person name="Moore M.J.F."/>
            <person name="Mullikin J.C."/>
            <person name="Nickerson T."/>
            <person name="Oliver K."/>
            <person name="Parker A."/>
            <person name="Patel R."/>
            <person name="Pearce T.A.V."/>
            <person name="Peck A.I."/>
            <person name="Phillimore B.J.C.T."/>
            <person name="Prathalingam S.R."/>
            <person name="Plumb R.W."/>
            <person name="Ramsay H."/>
            <person name="Rice C.M."/>
            <person name="Ross M.T."/>
            <person name="Scott C.E."/>
            <person name="Sehra H.K."/>
            <person name="Shownkeen R."/>
            <person name="Sims S."/>
            <person name="Skuce C.D."/>
            <person name="Smith M.L."/>
            <person name="Soderlund C."/>
            <person name="Steward C.A."/>
            <person name="Sulston J.E."/>
            <person name="Swann R.M."/>
            <person name="Sycamore N."/>
            <person name="Taylor R."/>
            <person name="Tee L."/>
            <person name="Thomas D.W."/>
            <person name="Thorpe A."/>
            <person name="Tracey A."/>
            <person name="Tromans A.C."/>
            <person name="Vaudin M."/>
            <person name="Wall M."/>
            <person name="Wallis J.M."/>
            <person name="Whitehead S.L."/>
            <person name="Whittaker P."/>
            <person name="Willey D.L."/>
            <person name="Williams L."/>
            <person name="Williams S.A."/>
            <person name="Wilming L."/>
            <person name="Wray P.W."/>
            <person name="Hubbard T."/>
            <person name="Durbin R.M."/>
            <person name="Bentley D.R."/>
            <person name="Beck S."/>
            <person name="Rogers J."/>
        </authorList>
    </citation>
    <scope>NUCLEOTIDE SEQUENCE [LARGE SCALE GENOMIC DNA]</scope>
</reference>
<reference key="4">
    <citation type="journal article" date="2004" name="Genome Res.">
        <title>The status, quality, and expansion of the NIH full-length cDNA project: the Mammalian Gene Collection (MGC).</title>
        <authorList>
            <consortium name="The MGC Project Team"/>
        </authorList>
    </citation>
    <scope>NUCLEOTIDE SEQUENCE [LARGE SCALE MRNA] (ISOFORM 2)</scope>
    <source>
        <tissue>Mammary gland</tissue>
    </source>
</reference>
<reference key="5">
    <citation type="journal article" date="1995" name="Curr. Eye Res.">
        <title>Chromosomal locations of the genes for the beaded filament proteins CP 115 and CP 47.</title>
        <authorList>
            <person name="Hess J.F."/>
            <person name="Casselman J.T."/>
            <person name="FitzGerald P.G."/>
        </authorList>
    </citation>
    <scope>NUCLEOTIDE SEQUENCE [MRNA] OF 120-249</scope>
    <scope>TISSUE SPECIFICITY</scope>
    <source>
        <tissue>Lens</tissue>
    </source>
</reference>
<reference key="6">
    <citation type="journal article" date="2000" name="Eur. J. Hum. Genet.">
        <title>An autosomal dominant posterior polar cataract locus maps to human chromosome 20p12-q12.</title>
        <authorList>
            <person name="Yamada K."/>
            <person name="Tomita H."/>
            <person name="Yoshiura K."/>
            <person name="Kondo S."/>
            <person name="Wakui K."/>
            <person name="Fukushima Y."/>
            <person name="Ikegawa S."/>
            <person name="Nakamura Y."/>
            <person name="Amemiya T."/>
            <person name="Niikawa N."/>
        </authorList>
    </citation>
    <scope>NUCLEOTIDE SEQUENCE [GENOMIC DNA] OF 1-178</scope>
</reference>
<reference key="7">
    <citation type="journal article" date="2007" name="Hum. Genet.">
        <title>Autosomal recessive juvenile onset cataract associated with mutation in BFSP1.</title>
        <authorList>
            <person name="Ramachandran R.D."/>
            <person name="Perumalsamy V."/>
            <person name="Hejtmancik J.F."/>
        </authorList>
    </citation>
    <scope>INVOLVEMENT IN CTRCT33</scope>
</reference>
<reference key="8">
    <citation type="journal article" date="2017" name="Biochem. Biophys. Res. Commun.">
        <title>Human alpha A-crystallin missing N-terminal domain poorly complexes with filensin and phakinin.</title>
        <authorList>
            <person name="Chaves J.M."/>
            <person name="Gupta R."/>
            <person name="Srivastava K."/>
            <person name="Srivastava O."/>
        </authorList>
    </citation>
    <scope>FUNCTION</scope>
    <scope>IDENTIFICATION IN A COMPLEX WITH BFSP2 AND CRYAA</scope>
</reference>
<reference key="9">
    <citation type="journal article" date="2017" name="Sci. Rep.">
        <title>Targeted exome sequencing of congenital cataracts related genes: broadening the mutation spectrum and genotype-phenotype correlations in 27 Chinese Han families.</title>
        <authorList>
            <person name="Zhai Y."/>
            <person name="Li J."/>
            <person name="Yu W."/>
            <person name="Zhu S."/>
            <person name="Yu Y."/>
            <person name="Wu M."/>
            <person name="Sun G."/>
            <person name="Gong X."/>
            <person name="Yao K."/>
        </authorList>
    </citation>
    <scope>INVOLVEMENT IN CTRCT33</scope>
</reference>
<reference key="10">
    <citation type="journal article" date="2019" name="Exp. Eye Res.">
        <title>BFSP1 C-terminal domains released by post-translational processing events can alter significantly the calcium regulation of AQP0 water permeability.</title>
        <authorList>
            <person name="Tapodi A."/>
            <person name="Clemens D.M."/>
            <person name="Uwineza A."/>
            <person name="Goldberg M.W."/>
            <person name="Thinon E."/>
            <person name="Heal W.P."/>
            <person name="Tate E.W."/>
            <person name="Nemeth-Cahalan K."/>
            <person name="Vorontsova I."/>
            <person name="Jarrin M."/>
            <person name="Hall J.E."/>
            <person name="Quinlan R.A."/>
        </authorList>
    </citation>
    <scope>FUNCTION</scope>
    <scope>TISSUE SPECIFICITY</scope>
    <scope>MYRISTOYLATION AT GLY-434</scope>
    <scope>PROTEOLYTIC CLEAVAGE</scope>
    <scope>MUTAGENESIS OF ASP-433 AND GLY-434</scope>
</reference>
<reference key="11">
    <citation type="journal article" date="2013" name="Mol. Vis.">
        <title>A novel beaded filament structural protein 1 (BFSP1) gene mutation associated with autosomal dominant congenital cataract in a Chinese family.</title>
        <authorList>
            <person name="Wang H."/>
            <person name="Zhang T."/>
            <person name="Wu D."/>
            <person name="Zhang J."/>
        </authorList>
    </citation>
    <scope>VARIANT CTRCT33 ASN-348</scope>
</reference>
<keyword id="KW-0007">Acetylation</keyword>
<keyword id="KW-0025">Alternative splicing</keyword>
<keyword id="KW-0898">Cataract</keyword>
<keyword id="KW-1003">Cell membrane</keyword>
<keyword id="KW-0175">Coiled coil</keyword>
<keyword id="KW-0963">Cytoplasm</keyword>
<keyword id="KW-0206">Cytoskeleton</keyword>
<keyword id="KW-0273">Eye lens protein</keyword>
<keyword id="KW-0403">Intermediate filament</keyword>
<keyword id="KW-0449">Lipoprotein</keyword>
<keyword id="KW-0472">Membrane</keyword>
<keyword id="KW-0519">Myristate</keyword>
<keyword id="KW-0597">Phosphoprotein</keyword>
<keyword id="KW-1267">Proteomics identification</keyword>
<keyword id="KW-1185">Reference proteome</keyword>
<keyword id="KW-0677">Repeat</keyword>
<sequence>MYRRSYVFQTRKEQYEHADEASRAAEPERPADEGWAGATSLAALQGLGERVAAHVQRARALEQRHAGLRRQLDAFQRLGELAGPEDALARQVESNRQRVRDLEAERARLERQGTEAQRALDEFRSKYENECECQLLLKEMLERLNKEADEALLHNLRLQLEAQFLQDDISAAKDRHKKNLLEVQTYISILQQIIHTTPPASIVTSGMREEKLLTEREVAALRSQLEEGREVLSHLQAQRVELQAQTTTLEQAIKSAHECYDDEIQLYNEQIETLRKEIEETERVLEKSSYDCRQLAVAQQTLKNELDRYHRIIEIEGNRLTSAFIETPIPLFTQSHGVSLSTGSGGKDLTRALQDITAAKPRQKALPKNVPRRKEIITKDKTNGALEDAPLKGLEDTKLVQVVLKEESESKFESESKEVSPLTQEGAPEDVPDGGQISKGFGKLYRKVKEKVRSPKEPETPTELYTKERHVLVTGDANYVDPRFYVSSITAKGGVAVSVAEDSVLYDGQVEPSPESPKPPLENGQVGLQEKEDGQPIDQQPIDKEIEPDGAELEGPEEKREGEERDEESRRPCAMVTPGAEEPSIPEPPKPAADQDGAEVLGTRSRSLPEKGPPKALAYKTVEVVESIEKISTESIQTYEETAVIVETMIGKTKSDKKKSGEKSS</sequence>